<gene>
    <name evidence="1" type="primary">gcvT</name>
    <name type="ordered locus">SBO_3087</name>
</gene>
<proteinExistence type="inferred from homology"/>
<reference key="1">
    <citation type="journal article" date="2005" name="Nucleic Acids Res.">
        <title>Genome dynamics and diversity of Shigella species, the etiologic agents of bacillary dysentery.</title>
        <authorList>
            <person name="Yang F."/>
            <person name="Yang J."/>
            <person name="Zhang X."/>
            <person name="Chen L."/>
            <person name="Jiang Y."/>
            <person name="Yan Y."/>
            <person name="Tang X."/>
            <person name="Wang J."/>
            <person name="Xiong Z."/>
            <person name="Dong J."/>
            <person name="Xue Y."/>
            <person name="Zhu Y."/>
            <person name="Xu X."/>
            <person name="Sun L."/>
            <person name="Chen S."/>
            <person name="Nie H."/>
            <person name="Peng J."/>
            <person name="Xu J."/>
            <person name="Wang Y."/>
            <person name="Yuan Z."/>
            <person name="Wen Y."/>
            <person name="Yao Z."/>
            <person name="Shen Y."/>
            <person name="Qiang B."/>
            <person name="Hou Y."/>
            <person name="Yu J."/>
            <person name="Jin Q."/>
        </authorList>
    </citation>
    <scope>NUCLEOTIDE SEQUENCE [LARGE SCALE GENOMIC DNA]</scope>
    <source>
        <strain>Sb227</strain>
    </source>
</reference>
<feature type="chain" id="PRO_1000047708" description="Aminomethyltransferase">
    <location>
        <begin position="1"/>
        <end position="364"/>
    </location>
</feature>
<sequence length="364" mass="40147">MAQQTPLYEQHTLCGARMVDFHGWMMPLHYGSQIDEHHAVRTDAGMFDVSHMTIVDLRGSRTREFLRYLLANDVAKLTKSGKALYSGMLNASGGVIDDLIVYYFTEDFFRLVVNSATREKDLSWITQHAEPFGIEITVRDDLSMIAVQGPNAQAKAATLFNDAQRQAVEGMKPFFGVQAGDLFIATTGYTGEAGYEIALPNEKAADFWRALVEAGVKPCGLGARDTLRLEAGMNLYGQEMDETISPLAANMGWTIAWEPADRDFIGREALEVQREHGTEKLVGLVMTEKGVLRNELPVRFTDAQGNQHEGIITSGTFSPTLGYSIALARVPEGIGETAIVQIRNREMPVKVTKPVFVRNGKAVA</sequence>
<dbReference type="EC" id="2.1.2.10" evidence="1"/>
<dbReference type="EMBL" id="CP000036">
    <property type="protein sequence ID" value="ABB67592.1"/>
    <property type="molecule type" value="Genomic_DNA"/>
</dbReference>
<dbReference type="RefSeq" id="WP_000068701.1">
    <property type="nucleotide sequence ID" value="NC_007613.1"/>
</dbReference>
<dbReference type="SMR" id="Q31WG6"/>
<dbReference type="GeneID" id="75205258"/>
<dbReference type="KEGG" id="sbo:SBO_3087"/>
<dbReference type="HOGENOM" id="CLU_007884_10_2_6"/>
<dbReference type="Proteomes" id="UP000007067">
    <property type="component" value="Chromosome"/>
</dbReference>
<dbReference type="GO" id="GO:0005829">
    <property type="term" value="C:cytosol"/>
    <property type="evidence" value="ECO:0007669"/>
    <property type="project" value="TreeGrafter"/>
</dbReference>
<dbReference type="GO" id="GO:0005960">
    <property type="term" value="C:glycine cleavage complex"/>
    <property type="evidence" value="ECO:0007669"/>
    <property type="project" value="InterPro"/>
</dbReference>
<dbReference type="GO" id="GO:0004047">
    <property type="term" value="F:aminomethyltransferase activity"/>
    <property type="evidence" value="ECO:0007669"/>
    <property type="project" value="UniProtKB-UniRule"/>
</dbReference>
<dbReference type="GO" id="GO:0008483">
    <property type="term" value="F:transaminase activity"/>
    <property type="evidence" value="ECO:0007669"/>
    <property type="project" value="UniProtKB-KW"/>
</dbReference>
<dbReference type="GO" id="GO:0019464">
    <property type="term" value="P:glycine decarboxylation via glycine cleavage system"/>
    <property type="evidence" value="ECO:0007669"/>
    <property type="project" value="UniProtKB-UniRule"/>
</dbReference>
<dbReference type="FunFam" id="2.40.30.110:FF:000001">
    <property type="entry name" value="Aminomethyltransferase"/>
    <property type="match status" value="1"/>
</dbReference>
<dbReference type="FunFam" id="3.30.70.1400:FF:000001">
    <property type="entry name" value="Aminomethyltransferase"/>
    <property type="match status" value="1"/>
</dbReference>
<dbReference type="FunFam" id="4.10.1250.10:FF:000001">
    <property type="entry name" value="Aminomethyltransferase"/>
    <property type="match status" value="1"/>
</dbReference>
<dbReference type="Gene3D" id="2.40.30.110">
    <property type="entry name" value="Aminomethyltransferase beta-barrel domains"/>
    <property type="match status" value="1"/>
</dbReference>
<dbReference type="Gene3D" id="3.30.70.1400">
    <property type="entry name" value="Aminomethyltransferase beta-barrel domains"/>
    <property type="match status" value="1"/>
</dbReference>
<dbReference type="Gene3D" id="4.10.1250.10">
    <property type="entry name" value="Aminomethyltransferase fragment"/>
    <property type="match status" value="1"/>
</dbReference>
<dbReference type="Gene3D" id="3.30.1360.120">
    <property type="entry name" value="Probable tRNA modification gtpase trme, domain 1"/>
    <property type="match status" value="1"/>
</dbReference>
<dbReference type="HAMAP" id="MF_00259">
    <property type="entry name" value="GcvT"/>
    <property type="match status" value="1"/>
</dbReference>
<dbReference type="InterPro" id="IPR006223">
    <property type="entry name" value="GCS_T"/>
</dbReference>
<dbReference type="InterPro" id="IPR022903">
    <property type="entry name" value="GCS_T_bac"/>
</dbReference>
<dbReference type="InterPro" id="IPR013977">
    <property type="entry name" value="GCST_C"/>
</dbReference>
<dbReference type="InterPro" id="IPR006222">
    <property type="entry name" value="GCV_T_N"/>
</dbReference>
<dbReference type="InterPro" id="IPR028896">
    <property type="entry name" value="GcvT/YgfZ/DmdA"/>
</dbReference>
<dbReference type="InterPro" id="IPR029043">
    <property type="entry name" value="GcvT/YgfZ_C"/>
</dbReference>
<dbReference type="InterPro" id="IPR027266">
    <property type="entry name" value="TrmE/GcvT_dom1"/>
</dbReference>
<dbReference type="NCBIfam" id="TIGR00528">
    <property type="entry name" value="gcvT"/>
    <property type="match status" value="1"/>
</dbReference>
<dbReference type="NCBIfam" id="NF001567">
    <property type="entry name" value="PRK00389.1"/>
    <property type="match status" value="1"/>
</dbReference>
<dbReference type="PANTHER" id="PTHR43757">
    <property type="entry name" value="AMINOMETHYLTRANSFERASE"/>
    <property type="match status" value="1"/>
</dbReference>
<dbReference type="PANTHER" id="PTHR43757:SF2">
    <property type="entry name" value="AMINOMETHYLTRANSFERASE, MITOCHONDRIAL"/>
    <property type="match status" value="1"/>
</dbReference>
<dbReference type="Pfam" id="PF01571">
    <property type="entry name" value="GCV_T"/>
    <property type="match status" value="1"/>
</dbReference>
<dbReference type="Pfam" id="PF08669">
    <property type="entry name" value="GCV_T_C"/>
    <property type="match status" value="1"/>
</dbReference>
<dbReference type="PIRSF" id="PIRSF006487">
    <property type="entry name" value="GcvT"/>
    <property type="match status" value="1"/>
</dbReference>
<dbReference type="SUPFAM" id="SSF101790">
    <property type="entry name" value="Aminomethyltransferase beta-barrel domain"/>
    <property type="match status" value="1"/>
</dbReference>
<dbReference type="SUPFAM" id="SSF103025">
    <property type="entry name" value="Folate-binding domain"/>
    <property type="match status" value="1"/>
</dbReference>
<keyword id="KW-0032">Aminotransferase</keyword>
<keyword id="KW-0808">Transferase</keyword>
<organism>
    <name type="scientific">Shigella boydii serotype 4 (strain Sb227)</name>
    <dbReference type="NCBI Taxonomy" id="300268"/>
    <lineage>
        <taxon>Bacteria</taxon>
        <taxon>Pseudomonadati</taxon>
        <taxon>Pseudomonadota</taxon>
        <taxon>Gammaproteobacteria</taxon>
        <taxon>Enterobacterales</taxon>
        <taxon>Enterobacteriaceae</taxon>
        <taxon>Shigella</taxon>
    </lineage>
</organism>
<name>GCST_SHIBS</name>
<evidence type="ECO:0000255" key="1">
    <source>
        <dbReference type="HAMAP-Rule" id="MF_00259"/>
    </source>
</evidence>
<accession>Q31WG6</accession>
<protein>
    <recommendedName>
        <fullName evidence="1">Aminomethyltransferase</fullName>
        <ecNumber evidence="1">2.1.2.10</ecNumber>
    </recommendedName>
    <alternativeName>
        <fullName evidence="1">Glycine cleavage system T protein</fullName>
    </alternativeName>
</protein>
<comment type="function">
    <text evidence="1">The glycine cleavage system catalyzes the degradation of glycine.</text>
</comment>
<comment type="catalytic activity">
    <reaction evidence="1">
        <text>N(6)-[(R)-S(8)-aminomethyldihydrolipoyl]-L-lysyl-[protein] + (6S)-5,6,7,8-tetrahydrofolate = N(6)-[(R)-dihydrolipoyl]-L-lysyl-[protein] + (6R)-5,10-methylene-5,6,7,8-tetrahydrofolate + NH4(+)</text>
        <dbReference type="Rhea" id="RHEA:16945"/>
        <dbReference type="Rhea" id="RHEA-COMP:10475"/>
        <dbReference type="Rhea" id="RHEA-COMP:10492"/>
        <dbReference type="ChEBI" id="CHEBI:15636"/>
        <dbReference type="ChEBI" id="CHEBI:28938"/>
        <dbReference type="ChEBI" id="CHEBI:57453"/>
        <dbReference type="ChEBI" id="CHEBI:83100"/>
        <dbReference type="ChEBI" id="CHEBI:83143"/>
        <dbReference type="EC" id="2.1.2.10"/>
    </reaction>
</comment>
<comment type="subunit">
    <text evidence="1">The glycine cleavage system is composed of four proteins: P, T, L and H.</text>
</comment>
<comment type="similarity">
    <text evidence="1">Belongs to the GcvT family.</text>
</comment>